<gene>
    <name evidence="1" type="primary">bioB</name>
    <name type="ordered locus">Ssed_2776</name>
</gene>
<feature type="chain" id="PRO_0000381626" description="Biotin synthase">
    <location>
        <begin position="1"/>
        <end position="354"/>
    </location>
</feature>
<feature type="domain" description="Radical SAM core" evidence="2">
    <location>
        <begin position="41"/>
        <end position="265"/>
    </location>
</feature>
<feature type="binding site" evidence="1">
    <location>
        <position position="56"/>
    </location>
    <ligand>
        <name>[4Fe-4S] cluster</name>
        <dbReference type="ChEBI" id="CHEBI:49883"/>
        <note>4Fe-4S-S-AdoMet</note>
    </ligand>
</feature>
<feature type="binding site" evidence="1">
    <location>
        <position position="60"/>
    </location>
    <ligand>
        <name>[4Fe-4S] cluster</name>
        <dbReference type="ChEBI" id="CHEBI:49883"/>
        <note>4Fe-4S-S-AdoMet</note>
    </ligand>
</feature>
<feature type="binding site" evidence="1">
    <location>
        <position position="63"/>
    </location>
    <ligand>
        <name>[4Fe-4S] cluster</name>
        <dbReference type="ChEBI" id="CHEBI:49883"/>
        <note>4Fe-4S-S-AdoMet</note>
    </ligand>
</feature>
<feature type="binding site" evidence="1">
    <location>
        <position position="100"/>
    </location>
    <ligand>
        <name>[2Fe-2S] cluster</name>
        <dbReference type="ChEBI" id="CHEBI:190135"/>
    </ligand>
</feature>
<feature type="binding site" evidence="1">
    <location>
        <position position="131"/>
    </location>
    <ligand>
        <name>[2Fe-2S] cluster</name>
        <dbReference type="ChEBI" id="CHEBI:190135"/>
    </ligand>
</feature>
<feature type="binding site" evidence="1">
    <location>
        <position position="191"/>
    </location>
    <ligand>
        <name>[2Fe-2S] cluster</name>
        <dbReference type="ChEBI" id="CHEBI:190135"/>
    </ligand>
</feature>
<feature type="binding site" evidence="1">
    <location>
        <position position="263"/>
    </location>
    <ligand>
        <name>[2Fe-2S] cluster</name>
        <dbReference type="ChEBI" id="CHEBI:190135"/>
    </ligand>
</feature>
<reference key="1">
    <citation type="submission" date="2007-08" db="EMBL/GenBank/DDBJ databases">
        <title>Complete sequence of Shewanella sediminis HAW-EB3.</title>
        <authorList>
            <consortium name="US DOE Joint Genome Institute"/>
            <person name="Copeland A."/>
            <person name="Lucas S."/>
            <person name="Lapidus A."/>
            <person name="Barry K."/>
            <person name="Glavina del Rio T."/>
            <person name="Dalin E."/>
            <person name="Tice H."/>
            <person name="Pitluck S."/>
            <person name="Chertkov O."/>
            <person name="Brettin T."/>
            <person name="Bruce D."/>
            <person name="Detter J.C."/>
            <person name="Han C."/>
            <person name="Schmutz J."/>
            <person name="Larimer F."/>
            <person name="Land M."/>
            <person name="Hauser L."/>
            <person name="Kyrpides N."/>
            <person name="Kim E."/>
            <person name="Zhao J.-S."/>
            <person name="Richardson P."/>
        </authorList>
    </citation>
    <scope>NUCLEOTIDE SEQUENCE [LARGE SCALE GENOMIC DNA]</scope>
    <source>
        <strain>HAW-EB3</strain>
    </source>
</reference>
<proteinExistence type="inferred from homology"/>
<sequence length="354" mass="39409">MSDIQLRHDWKHDEIEALFALPMNDLLFKAHSLHRQVFDPNEVQISRLLSIKTGACPEDCKYCPQSARYDTGLEKERLIEIEKVLTEARSAKAAGASRFCMGAAWRNPHARDMPYLKDMVSEVKAMGMETCMTLGMLSGTQAEELAEAGLDYYNHNLDTSPEYYGEIITTRTYQDRLDTLSNVRSAGMKVCSGGIVGMGEQASDRAGLLQQLANMEQHPDSVPINMLVKVAGTPFENLDDLDPLEFVRTIAVARIIMPHSRVRLSAGREKMTDEMQAMCFFAGANSIFYGCKLLTTNNPEENEDMTLFKRLGLHPEQGKYATVEDDKEVMAKASAKANAIKDKQSGAFYDAGAL</sequence>
<accession>A8FX10</accession>
<organism>
    <name type="scientific">Shewanella sediminis (strain HAW-EB3)</name>
    <dbReference type="NCBI Taxonomy" id="425104"/>
    <lineage>
        <taxon>Bacteria</taxon>
        <taxon>Pseudomonadati</taxon>
        <taxon>Pseudomonadota</taxon>
        <taxon>Gammaproteobacteria</taxon>
        <taxon>Alteromonadales</taxon>
        <taxon>Shewanellaceae</taxon>
        <taxon>Shewanella</taxon>
    </lineage>
</organism>
<evidence type="ECO:0000255" key="1">
    <source>
        <dbReference type="HAMAP-Rule" id="MF_01694"/>
    </source>
</evidence>
<evidence type="ECO:0000255" key="2">
    <source>
        <dbReference type="PROSITE-ProRule" id="PRU01266"/>
    </source>
</evidence>
<keyword id="KW-0001">2Fe-2S</keyword>
<keyword id="KW-0004">4Fe-4S</keyword>
<keyword id="KW-0093">Biotin biosynthesis</keyword>
<keyword id="KW-0408">Iron</keyword>
<keyword id="KW-0411">Iron-sulfur</keyword>
<keyword id="KW-0479">Metal-binding</keyword>
<keyword id="KW-1185">Reference proteome</keyword>
<keyword id="KW-0949">S-adenosyl-L-methionine</keyword>
<keyword id="KW-0808">Transferase</keyword>
<name>BIOB_SHESH</name>
<protein>
    <recommendedName>
        <fullName evidence="1">Biotin synthase</fullName>
        <ecNumber evidence="1">2.8.1.6</ecNumber>
    </recommendedName>
</protein>
<comment type="function">
    <text evidence="1">Catalyzes the conversion of dethiobiotin (DTB) to biotin by the insertion of a sulfur atom into dethiobiotin via a radical-based mechanism.</text>
</comment>
<comment type="catalytic activity">
    <reaction evidence="1">
        <text>(4R,5S)-dethiobiotin + (sulfur carrier)-SH + 2 reduced [2Fe-2S]-[ferredoxin] + 2 S-adenosyl-L-methionine = (sulfur carrier)-H + biotin + 2 5'-deoxyadenosine + 2 L-methionine + 2 oxidized [2Fe-2S]-[ferredoxin]</text>
        <dbReference type="Rhea" id="RHEA:22060"/>
        <dbReference type="Rhea" id="RHEA-COMP:10000"/>
        <dbReference type="Rhea" id="RHEA-COMP:10001"/>
        <dbReference type="Rhea" id="RHEA-COMP:14737"/>
        <dbReference type="Rhea" id="RHEA-COMP:14739"/>
        <dbReference type="ChEBI" id="CHEBI:17319"/>
        <dbReference type="ChEBI" id="CHEBI:29917"/>
        <dbReference type="ChEBI" id="CHEBI:33737"/>
        <dbReference type="ChEBI" id="CHEBI:33738"/>
        <dbReference type="ChEBI" id="CHEBI:57586"/>
        <dbReference type="ChEBI" id="CHEBI:57844"/>
        <dbReference type="ChEBI" id="CHEBI:59789"/>
        <dbReference type="ChEBI" id="CHEBI:64428"/>
        <dbReference type="ChEBI" id="CHEBI:149473"/>
        <dbReference type="EC" id="2.8.1.6"/>
    </reaction>
</comment>
<comment type="cofactor">
    <cofactor evidence="1">
        <name>[4Fe-4S] cluster</name>
        <dbReference type="ChEBI" id="CHEBI:49883"/>
    </cofactor>
    <text evidence="1">Binds 1 [4Fe-4S] cluster. The cluster is coordinated with 3 cysteines and an exchangeable S-adenosyl-L-methionine.</text>
</comment>
<comment type="cofactor">
    <cofactor evidence="1">
        <name>[2Fe-2S] cluster</name>
        <dbReference type="ChEBI" id="CHEBI:190135"/>
    </cofactor>
    <text evidence="1">Binds 1 [2Fe-2S] cluster. The cluster is coordinated with 3 cysteines and 1 arginine.</text>
</comment>
<comment type="pathway">
    <text evidence="1">Cofactor biosynthesis; biotin biosynthesis; biotin from 7,8-diaminononanoate: step 2/2.</text>
</comment>
<comment type="subunit">
    <text evidence="1">Homodimer.</text>
</comment>
<comment type="similarity">
    <text evidence="1">Belongs to the radical SAM superfamily. Biotin synthase family.</text>
</comment>
<dbReference type="EC" id="2.8.1.6" evidence="1"/>
<dbReference type="EMBL" id="CP000821">
    <property type="protein sequence ID" value="ABV37383.1"/>
    <property type="molecule type" value="Genomic_DNA"/>
</dbReference>
<dbReference type="RefSeq" id="WP_012143113.1">
    <property type="nucleotide sequence ID" value="NC_009831.1"/>
</dbReference>
<dbReference type="SMR" id="A8FX10"/>
<dbReference type="STRING" id="425104.Ssed_2776"/>
<dbReference type="KEGG" id="sse:Ssed_2776"/>
<dbReference type="eggNOG" id="COG0502">
    <property type="taxonomic scope" value="Bacteria"/>
</dbReference>
<dbReference type="HOGENOM" id="CLU_033172_1_2_6"/>
<dbReference type="OrthoDB" id="9786826at2"/>
<dbReference type="UniPathway" id="UPA00078">
    <property type="reaction ID" value="UER00162"/>
</dbReference>
<dbReference type="Proteomes" id="UP000002015">
    <property type="component" value="Chromosome"/>
</dbReference>
<dbReference type="GO" id="GO:0051537">
    <property type="term" value="F:2 iron, 2 sulfur cluster binding"/>
    <property type="evidence" value="ECO:0007669"/>
    <property type="project" value="UniProtKB-KW"/>
</dbReference>
<dbReference type="GO" id="GO:0051539">
    <property type="term" value="F:4 iron, 4 sulfur cluster binding"/>
    <property type="evidence" value="ECO:0007669"/>
    <property type="project" value="UniProtKB-KW"/>
</dbReference>
<dbReference type="GO" id="GO:0004076">
    <property type="term" value="F:biotin synthase activity"/>
    <property type="evidence" value="ECO:0007669"/>
    <property type="project" value="UniProtKB-UniRule"/>
</dbReference>
<dbReference type="GO" id="GO:0005506">
    <property type="term" value="F:iron ion binding"/>
    <property type="evidence" value="ECO:0007669"/>
    <property type="project" value="UniProtKB-UniRule"/>
</dbReference>
<dbReference type="GO" id="GO:0009102">
    <property type="term" value="P:biotin biosynthetic process"/>
    <property type="evidence" value="ECO:0007669"/>
    <property type="project" value="UniProtKB-UniRule"/>
</dbReference>
<dbReference type="CDD" id="cd01335">
    <property type="entry name" value="Radical_SAM"/>
    <property type="match status" value="1"/>
</dbReference>
<dbReference type="FunFam" id="3.20.20.70:FF:000011">
    <property type="entry name" value="Biotin synthase"/>
    <property type="match status" value="1"/>
</dbReference>
<dbReference type="Gene3D" id="3.20.20.70">
    <property type="entry name" value="Aldolase class I"/>
    <property type="match status" value="1"/>
</dbReference>
<dbReference type="HAMAP" id="MF_01694">
    <property type="entry name" value="BioB"/>
    <property type="match status" value="1"/>
</dbReference>
<dbReference type="InterPro" id="IPR013785">
    <property type="entry name" value="Aldolase_TIM"/>
</dbReference>
<dbReference type="InterPro" id="IPR010722">
    <property type="entry name" value="BATS_dom"/>
</dbReference>
<dbReference type="InterPro" id="IPR002684">
    <property type="entry name" value="Biotin_synth/BioAB"/>
</dbReference>
<dbReference type="InterPro" id="IPR024177">
    <property type="entry name" value="Biotin_synthase"/>
</dbReference>
<dbReference type="InterPro" id="IPR006638">
    <property type="entry name" value="Elp3/MiaA/NifB-like_rSAM"/>
</dbReference>
<dbReference type="InterPro" id="IPR007197">
    <property type="entry name" value="rSAM"/>
</dbReference>
<dbReference type="NCBIfam" id="TIGR00433">
    <property type="entry name" value="bioB"/>
    <property type="match status" value="1"/>
</dbReference>
<dbReference type="PANTHER" id="PTHR22976">
    <property type="entry name" value="BIOTIN SYNTHASE"/>
    <property type="match status" value="1"/>
</dbReference>
<dbReference type="PANTHER" id="PTHR22976:SF2">
    <property type="entry name" value="BIOTIN SYNTHASE, MITOCHONDRIAL"/>
    <property type="match status" value="1"/>
</dbReference>
<dbReference type="Pfam" id="PF06968">
    <property type="entry name" value="BATS"/>
    <property type="match status" value="1"/>
</dbReference>
<dbReference type="Pfam" id="PF04055">
    <property type="entry name" value="Radical_SAM"/>
    <property type="match status" value="1"/>
</dbReference>
<dbReference type="PIRSF" id="PIRSF001619">
    <property type="entry name" value="Biotin_synth"/>
    <property type="match status" value="1"/>
</dbReference>
<dbReference type="SFLD" id="SFLDF00272">
    <property type="entry name" value="biotin_synthase"/>
    <property type="match status" value="1"/>
</dbReference>
<dbReference type="SFLD" id="SFLDS00029">
    <property type="entry name" value="Radical_SAM"/>
    <property type="match status" value="1"/>
</dbReference>
<dbReference type="SMART" id="SM00876">
    <property type="entry name" value="BATS"/>
    <property type="match status" value="1"/>
</dbReference>
<dbReference type="SMART" id="SM00729">
    <property type="entry name" value="Elp3"/>
    <property type="match status" value="1"/>
</dbReference>
<dbReference type="SUPFAM" id="SSF102114">
    <property type="entry name" value="Radical SAM enzymes"/>
    <property type="match status" value="1"/>
</dbReference>
<dbReference type="PROSITE" id="PS51918">
    <property type="entry name" value="RADICAL_SAM"/>
    <property type="match status" value="1"/>
</dbReference>